<accession>G0RY74</accession>
<keyword id="KW-0002">3D-structure</keyword>
<keyword id="KW-0131">Cell cycle</keyword>
<keyword id="KW-0132">Cell division</keyword>
<keyword id="KW-0137">Centromere</keyword>
<keyword id="KW-0158">Chromosome</keyword>
<keyword id="KW-0159">Chromosome partition</keyword>
<keyword id="KW-0963">Cytoplasm</keyword>
<keyword id="KW-0206">Cytoskeleton</keyword>
<keyword id="KW-0995">Kinetochore</keyword>
<keyword id="KW-0493">Microtubule</keyword>
<keyword id="KW-0498">Mitosis</keyword>
<keyword id="KW-0539">Nucleus</keyword>
<keyword id="KW-1185">Reference proteome</keyword>
<organism evidence="7">
    <name type="scientific">Chaetomium thermophilum (strain DSM 1495 / CBS 144.50 / IMI 039719)</name>
    <name type="common">Thermochaetoides thermophila</name>
    <dbReference type="NCBI Taxonomy" id="759272"/>
    <lineage>
        <taxon>Eukaryota</taxon>
        <taxon>Fungi</taxon>
        <taxon>Dikarya</taxon>
        <taxon>Ascomycota</taxon>
        <taxon>Pezizomycotina</taxon>
        <taxon>Sordariomycetes</taxon>
        <taxon>Sordariomycetidae</taxon>
        <taxon>Sordariales</taxon>
        <taxon>Chaetomiaceae</taxon>
        <taxon>Thermochaetoides</taxon>
    </lineage>
</organism>
<dbReference type="EMBL" id="GL988032">
    <property type="protein sequence ID" value="EGS23860.1"/>
    <property type="molecule type" value="Genomic_DNA"/>
</dbReference>
<dbReference type="RefSeq" id="XP_006691102.1">
    <property type="nucleotide sequence ID" value="XM_006691039.1"/>
</dbReference>
<dbReference type="PDB" id="6CFZ">
    <property type="method" value="EM"/>
    <property type="resolution" value="4.50 A"/>
    <property type="chains" value="B=18-83"/>
</dbReference>
<dbReference type="PDBsum" id="6CFZ"/>
<dbReference type="EMDB" id="EMD-7469"/>
<dbReference type="SMR" id="G0RY74"/>
<dbReference type="IntAct" id="G0RY74">
    <property type="interactions" value="1"/>
</dbReference>
<dbReference type="STRING" id="759272.G0RY74"/>
<dbReference type="GeneID" id="18254606"/>
<dbReference type="KEGG" id="cthr:CTHT_0005680"/>
<dbReference type="eggNOG" id="ENOG502SCNH">
    <property type="taxonomic scope" value="Eukaryota"/>
</dbReference>
<dbReference type="HOGENOM" id="CLU_118180_2_1_1"/>
<dbReference type="OMA" id="WAVINEQ"/>
<dbReference type="OrthoDB" id="2443965at2759"/>
<dbReference type="Proteomes" id="UP000008066">
    <property type="component" value="Unassembled WGS sequence"/>
</dbReference>
<dbReference type="GO" id="GO:0005737">
    <property type="term" value="C:cytoplasm"/>
    <property type="evidence" value="ECO:0007669"/>
    <property type="project" value="UniProtKB-KW"/>
</dbReference>
<dbReference type="GO" id="GO:0042729">
    <property type="term" value="C:DASH complex"/>
    <property type="evidence" value="ECO:0000314"/>
    <property type="project" value="UniProtKB"/>
</dbReference>
<dbReference type="GO" id="GO:0000776">
    <property type="term" value="C:kinetochore"/>
    <property type="evidence" value="ECO:0000305"/>
    <property type="project" value="UniProtKB"/>
</dbReference>
<dbReference type="GO" id="GO:0005874">
    <property type="term" value="C:microtubule"/>
    <property type="evidence" value="ECO:0007669"/>
    <property type="project" value="UniProtKB-KW"/>
</dbReference>
<dbReference type="GO" id="GO:0072686">
    <property type="term" value="C:mitotic spindle"/>
    <property type="evidence" value="ECO:0000305"/>
    <property type="project" value="UniProtKB"/>
</dbReference>
<dbReference type="GO" id="GO:0051010">
    <property type="term" value="F:microtubule plus-end binding"/>
    <property type="evidence" value="ECO:0007669"/>
    <property type="project" value="TreeGrafter"/>
</dbReference>
<dbReference type="GO" id="GO:0051315">
    <property type="term" value="P:attachment of mitotic spindle microtubules to kinetochore"/>
    <property type="evidence" value="ECO:0000305"/>
    <property type="project" value="UniProtKB"/>
</dbReference>
<dbReference type="GO" id="GO:0008608">
    <property type="term" value="P:attachment of spindle microtubules to kinetochore"/>
    <property type="evidence" value="ECO:0000250"/>
    <property type="project" value="UniProtKB"/>
</dbReference>
<dbReference type="GO" id="GO:0051301">
    <property type="term" value="P:cell division"/>
    <property type="evidence" value="ECO:0007669"/>
    <property type="project" value="UniProtKB-KW"/>
</dbReference>
<dbReference type="GO" id="GO:1990758">
    <property type="term" value="P:mitotic sister chromatid biorientation"/>
    <property type="evidence" value="ECO:0000250"/>
    <property type="project" value="UniProtKB"/>
</dbReference>
<dbReference type="GO" id="GO:1990976">
    <property type="term" value="P:protein transport along microtubule to mitotic spindle pole body"/>
    <property type="evidence" value="ECO:0000250"/>
    <property type="project" value="UniProtKB"/>
</dbReference>
<dbReference type="InterPro" id="IPR013965">
    <property type="entry name" value="DASH_Dad3"/>
</dbReference>
<dbReference type="PANTHER" id="PTHR28017">
    <property type="entry name" value="DASH COMPLEX SUBUNIT DAD3"/>
    <property type="match status" value="1"/>
</dbReference>
<dbReference type="PANTHER" id="PTHR28017:SF1">
    <property type="entry name" value="DASH COMPLEX SUBUNIT DAD3"/>
    <property type="match status" value="1"/>
</dbReference>
<dbReference type="Pfam" id="PF08656">
    <property type="entry name" value="DASH_Dad3"/>
    <property type="match status" value="1"/>
</dbReference>
<gene>
    <name evidence="4" type="primary">DAD3</name>
    <name evidence="6" type="ORF">CTHT_0005680</name>
</gene>
<evidence type="ECO:0000250" key="1">
    <source>
        <dbReference type="UniProtKB" id="P62505"/>
    </source>
</evidence>
<evidence type="ECO:0000250" key="2">
    <source>
        <dbReference type="UniProtKB" id="P69850"/>
    </source>
</evidence>
<evidence type="ECO:0000269" key="3">
    <source>
    </source>
</evidence>
<evidence type="ECO:0000303" key="4">
    <source>
    </source>
</evidence>
<evidence type="ECO:0000305" key="5"/>
<evidence type="ECO:0000312" key="6">
    <source>
        <dbReference type="EMBL" id="EGS23860.1"/>
    </source>
</evidence>
<evidence type="ECO:0000312" key="7">
    <source>
        <dbReference type="Proteomes" id="UP000008066"/>
    </source>
</evidence>
<evidence type="ECO:0007744" key="8">
    <source>
        <dbReference type="PDB" id="6CFZ"/>
    </source>
</evidence>
<proteinExistence type="evidence at protein level"/>
<sequence length="95" mass="10408">MDPQARPQSSLLTAAPELSPLEQEVLDEYERLSENMKKLAVLLDELASAPATEILDGLRELERKTSLVFTLLKASVYSIVLQQEIDWGGGAGDGH</sequence>
<feature type="chain" id="PRO_0000459475" description="DASH complex subunit DAD3">
    <location>
        <begin position="1"/>
        <end position="95"/>
    </location>
</feature>
<protein>
    <recommendedName>
        <fullName evidence="4">DASH complex subunit DAD3</fullName>
    </recommendedName>
    <alternativeName>
        <fullName>Outer kinetochore protein DAD3</fullName>
    </alternativeName>
</protein>
<reference evidence="7" key="1">
    <citation type="journal article" date="2011" name="Cell">
        <title>Insight into structure and assembly of the nuclear pore complex by utilizing the genome of a eukaryotic thermophile.</title>
        <authorList>
            <person name="Amlacher S."/>
            <person name="Sarges P."/>
            <person name="Flemming D."/>
            <person name="van Noort V."/>
            <person name="Kunze R."/>
            <person name="Devos D.P."/>
            <person name="Arumugam M."/>
            <person name="Bork P."/>
            <person name="Hurt E."/>
        </authorList>
    </citation>
    <scope>NUCLEOTIDE SEQUENCE [LARGE SCALE GENOMIC DNA]</scope>
    <source>
        <strain evidence="7">DSM 1495 / CBS 144.50 / IMI 039719</strain>
    </source>
</reference>
<reference evidence="8" key="2">
    <citation type="journal article" date="2018" name="Science">
        <title>Structure of the DASH/Dam1 complex shows its role at the yeast kinetochore-microtubule interface.</title>
        <authorList>
            <person name="Jenni S."/>
            <person name="Harrison S.C."/>
        </authorList>
    </citation>
    <scope>STRUCTURE BY ELECTRON MICROSCOPY (4.50 ANGSTROMS) OF 18-83</scope>
    <scope>IDENTIFICATION IN THE DASH COMPLEX</scope>
</reference>
<comment type="function">
    <text evidence="2">Component of the DASH complex that connects microtubules with kinetochores and couples microtubule depolymerisation to chromosome movement; it is involved in retrieving kinetochores to the spindle poles before their re-orientation on the spindle in early mitosis and allows microtubule depolymerization to pull chromosomes apart and resist detachment during anaphase. Kinetochores, consisting of a centromere-associated inner segment and a microtubule-contacting outer segment, play a crucial role in chromosome segregation by mediating the physical connection between centromeric DNA and microtubules. Kinetochores also serve as an input point for the spindle assembly checkpoint, which delays anaphase until all chromosomes have bioriented on the mitotic spindle.</text>
</comment>
<comment type="subunit">
    <text evidence="1 2 3">Component of the DASH complex consisting of ASK1, DAD1, DAD2, DAD3, DAD4, DAM1, DUO1, HSK3, SPC19 and SPC34, with a stoichiometry of one copy of each subunit per complex (PubMed:29724956). Multiple DASH complexes oligomerize to form a ring that encircles spindle microtubules and organizes the rod-like NDC80 complexes of the outer kinetochore (PubMed:29724956). DASH complex oligomerization strengthens microtubule attachments (By similarity). On cytoplasmic microtubules, DASH complexes appear to form patches instead of rings (By similarity).</text>
</comment>
<comment type="subcellular location">
    <subcellularLocation>
        <location evidence="2">Chromosome</location>
        <location evidence="2">Centromere</location>
        <location evidence="2">Kinetochore</location>
    </subcellularLocation>
    <subcellularLocation>
        <location evidence="2">Cytoplasm</location>
        <location evidence="2">Cytoskeleton</location>
        <location evidence="2">Spindle</location>
    </subcellularLocation>
    <subcellularLocation>
        <location evidence="2">Nucleus</location>
    </subcellularLocation>
</comment>
<comment type="similarity">
    <text evidence="5">Belongs to the DASH complex DAD3 family.</text>
</comment>
<name>DAD3_CHATD</name>